<protein>
    <recommendedName>
        <fullName>Long-chain-fatty-acid--CoA ligase 1</fullName>
        <ecNumber evidence="12">6.2.1.3</ecNumber>
    </recommendedName>
    <alternativeName>
        <fullName>Fatty acid activator 1</fullName>
    </alternativeName>
    <alternativeName>
        <fullName>Fatty acyl-CoA synthetase</fullName>
        <shortName>ACS</shortName>
        <shortName>FACS</shortName>
    </alternativeName>
    <alternativeName>
        <fullName>Long-chain acyl-CoA synthetase 1</fullName>
    </alternativeName>
</protein>
<dbReference type="EC" id="6.2.1.3" evidence="12"/>
<dbReference type="EMBL" id="X66194">
    <property type="protein sequence ID" value="CAA46957.1"/>
    <property type="molecule type" value="Genomic_DNA"/>
</dbReference>
<dbReference type="EMBL" id="X90565">
    <property type="protein sequence ID" value="CAA62172.1"/>
    <property type="molecule type" value="Genomic_DNA"/>
</dbReference>
<dbReference type="EMBL" id="Z75225">
    <property type="protein sequence ID" value="CAA99637.1"/>
    <property type="molecule type" value="Genomic_DNA"/>
</dbReference>
<dbReference type="EMBL" id="BK006948">
    <property type="protein sequence ID" value="DAA11082.1"/>
    <property type="molecule type" value="Genomic_DNA"/>
</dbReference>
<dbReference type="PIR" id="S23052">
    <property type="entry name" value="S23052"/>
</dbReference>
<dbReference type="RefSeq" id="NP_014962.3">
    <property type="nucleotide sequence ID" value="NM_001183737.3"/>
</dbReference>
<dbReference type="SMR" id="P30624"/>
<dbReference type="BioGRID" id="34704">
    <property type="interactions" value="168"/>
</dbReference>
<dbReference type="DIP" id="DIP-4654N"/>
<dbReference type="FunCoup" id="P30624">
    <property type="interactions" value="751"/>
</dbReference>
<dbReference type="IntAct" id="P30624">
    <property type="interactions" value="9"/>
</dbReference>
<dbReference type="STRING" id="4932.YOR317W"/>
<dbReference type="SwissLipids" id="SLP:000000132"/>
<dbReference type="CarbonylDB" id="P30624"/>
<dbReference type="iPTMnet" id="P30624"/>
<dbReference type="PaxDb" id="4932-YOR317W"/>
<dbReference type="PeptideAtlas" id="P30624"/>
<dbReference type="EnsemblFungi" id="YOR317W_mRNA">
    <property type="protein sequence ID" value="YOR317W"/>
    <property type="gene ID" value="YOR317W"/>
</dbReference>
<dbReference type="GeneID" id="854495"/>
<dbReference type="KEGG" id="sce:YOR317W"/>
<dbReference type="AGR" id="SGD:S000005844"/>
<dbReference type="SGD" id="S000005844">
    <property type="gene designation" value="FAA1"/>
</dbReference>
<dbReference type="VEuPathDB" id="FungiDB:YOR317W"/>
<dbReference type="eggNOG" id="KOG1180">
    <property type="taxonomic scope" value="Eukaryota"/>
</dbReference>
<dbReference type="GeneTree" id="ENSGT00940000171609"/>
<dbReference type="HOGENOM" id="CLU_000022_45_2_1"/>
<dbReference type="InParanoid" id="P30624"/>
<dbReference type="OMA" id="KIFQWAA"/>
<dbReference type="OrthoDB" id="1700726at2759"/>
<dbReference type="BioCyc" id="YEAST:YOR317W-MONOMER"/>
<dbReference type="Reactome" id="R-SCE-434313">
    <property type="pathway name" value="Intracellular metabolism of fatty acids regulates insulin secretion"/>
</dbReference>
<dbReference type="Reactome" id="R-SCE-75876">
    <property type="pathway name" value="Synthesis of very long-chain fatty acyl-CoAs"/>
</dbReference>
<dbReference type="BioGRID-ORCS" id="854495">
    <property type="hits" value="1 hit in 10 CRISPR screens"/>
</dbReference>
<dbReference type="PRO" id="PR:P30624"/>
<dbReference type="Proteomes" id="UP000002311">
    <property type="component" value="Chromosome XV"/>
</dbReference>
<dbReference type="RNAct" id="P30624">
    <property type="molecule type" value="protein"/>
</dbReference>
<dbReference type="GO" id="GO:0005783">
    <property type="term" value="C:endoplasmic reticulum"/>
    <property type="evidence" value="ECO:0007005"/>
    <property type="project" value="SGD"/>
</dbReference>
<dbReference type="GO" id="GO:0005811">
    <property type="term" value="C:lipid droplet"/>
    <property type="evidence" value="ECO:0000314"/>
    <property type="project" value="SGD"/>
</dbReference>
<dbReference type="GO" id="GO:0005741">
    <property type="term" value="C:mitochondrial outer membrane"/>
    <property type="evidence" value="ECO:0007005"/>
    <property type="project" value="SGD"/>
</dbReference>
<dbReference type="GO" id="GO:0005739">
    <property type="term" value="C:mitochondrion"/>
    <property type="evidence" value="ECO:0007005"/>
    <property type="project" value="SGD"/>
</dbReference>
<dbReference type="GO" id="GO:0005886">
    <property type="term" value="C:plasma membrane"/>
    <property type="evidence" value="ECO:0000314"/>
    <property type="project" value="SGD"/>
</dbReference>
<dbReference type="GO" id="GO:0005524">
    <property type="term" value="F:ATP binding"/>
    <property type="evidence" value="ECO:0007669"/>
    <property type="project" value="UniProtKB-KW"/>
</dbReference>
<dbReference type="GO" id="GO:0004467">
    <property type="term" value="F:long-chain fatty acid-CoA ligase activity"/>
    <property type="evidence" value="ECO:0000314"/>
    <property type="project" value="SGD"/>
</dbReference>
<dbReference type="GO" id="GO:0031956">
    <property type="term" value="F:medium-chain fatty acid-CoA ligase activity"/>
    <property type="evidence" value="ECO:0000314"/>
    <property type="project" value="SGD"/>
</dbReference>
<dbReference type="GO" id="GO:0044539">
    <property type="term" value="P:long-chain fatty acid import into cell"/>
    <property type="evidence" value="ECO:0000315"/>
    <property type="project" value="SGD"/>
</dbReference>
<dbReference type="GO" id="GO:0001676">
    <property type="term" value="P:long-chain fatty acid metabolic process"/>
    <property type="evidence" value="ECO:0000318"/>
    <property type="project" value="GO_Central"/>
</dbReference>
<dbReference type="GO" id="GO:0035336">
    <property type="term" value="P:long-chain fatty-acyl-CoA metabolic process"/>
    <property type="evidence" value="ECO:0000315"/>
    <property type="project" value="SGD"/>
</dbReference>
<dbReference type="GO" id="GO:1905329">
    <property type="term" value="P:sphingoid long-chain base transport"/>
    <property type="evidence" value="ECO:0000315"/>
    <property type="project" value="SGD"/>
</dbReference>
<dbReference type="CDD" id="cd17639">
    <property type="entry name" value="LC_FACS_euk1"/>
    <property type="match status" value="1"/>
</dbReference>
<dbReference type="Gene3D" id="3.40.50.12780">
    <property type="entry name" value="N-terminal domain of ligase-like"/>
    <property type="match status" value="1"/>
</dbReference>
<dbReference type="InterPro" id="IPR020845">
    <property type="entry name" value="AMP-binding_CS"/>
</dbReference>
<dbReference type="InterPro" id="IPR000873">
    <property type="entry name" value="AMP-dep_synth/lig_dom"/>
</dbReference>
<dbReference type="InterPro" id="IPR042099">
    <property type="entry name" value="ANL_N_sf"/>
</dbReference>
<dbReference type="PANTHER" id="PTHR43272:SF83">
    <property type="entry name" value="ACYL-COA SYNTHETASE LONG-CHAIN, ISOFORM J"/>
    <property type="match status" value="1"/>
</dbReference>
<dbReference type="PANTHER" id="PTHR43272">
    <property type="entry name" value="LONG-CHAIN-FATTY-ACID--COA LIGASE"/>
    <property type="match status" value="1"/>
</dbReference>
<dbReference type="Pfam" id="PF00501">
    <property type="entry name" value="AMP-binding"/>
    <property type="match status" value="1"/>
</dbReference>
<dbReference type="SUPFAM" id="SSF56801">
    <property type="entry name" value="Acetyl-CoA synthetase-like"/>
    <property type="match status" value="1"/>
</dbReference>
<dbReference type="PROSITE" id="PS00455">
    <property type="entry name" value="AMP_BINDING"/>
    <property type="match status" value="1"/>
</dbReference>
<comment type="function">
    <text evidence="4 5 8 11 12">Activates long-chain fatty acids (LCFA) by esterification of the fatty acids into metabolically active CoA-thioesters for subsequent degradation or incorporation into phospholipids. Also facilitates the transport of LCFAs into the cell, either by active transport or by decreasing the intracellular LCFA concentration (PubMed:11477098, PubMed:12601005, PubMed:27136724, PubMed:8206942). It may supplement intracellular myristoyl-CoA pools from exogenous myristate. Preferentially acts on C12:0-C16:0 fatty acids with myristic and pentadecanic acid (C15:0) having the highest activities (PubMed:8206942). Also involved in long-chain base (LCB) uptake of sphingolipids. In contrast ot LCFA uptake, LCB uptake does not require ATP, suggesting that the enzyme is directly involved in active LCB uptake (PubMed:27136724). Involved in the sphingolipid-to-glycerolipid metabolic pathway, converting the sphingolipid metabolite hexadecenoic acid to hexadecenoyl-CoA, which is then further converted to glycerolipids (PubMed:22633490).</text>
</comment>
<comment type="catalytic activity">
    <reaction evidence="12">
        <text>a long-chain fatty acid + ATP + CoA = a long-chain fatty acyl-CoA + AMP + diphosphate</text>
        <dbReference type="Rhea" id="RHEA:15421"/>
        <dbReference type="ChEBI" id="CHEBI:30616"/>
        <dbReference type="ChEBI" id="CHEBI:33019"/>
        <dbReference type="ChEBI" id="CHEBI:57287"/>
        <dbReference type="ChEBI" id="CHEBI:57560"/>
        <dbReference type="ChEBI" id="CHEBI:83139"/>
        <dbReference type="ChEBI" id="CHEBI:456215"/>
        <dbReference type="EC" id="6.2.1.3"/>
    </reaction>
</comment>
<comment type="catalytic activity">
    <reaction evidence="4 12">
        <text>(9Z)-octadecenoate + ATP + CoA = (9Z)-octadecenoyl-CoA + AMP + diphosphate</text>
        <dbReference type="Rhea" id="RHEA:33607"/>
        <dbReference type="ChEBI" id="CHEBI:30616"/>
        <dbReference type="ChEBI" id="CHEBI:30823"/>
        <dbReference type="ChEBI" id="CHEBI:33019"/>
        <dbReference type="ChEBI" id="CHEBI:57287"/>
        <dbReference type="ChEBI" id="CHEBI:57387"/>
        <dbReference type="ChEBI" id="CHEBI:456215"/>
    </reaction>
    <physiologicalReaction direction="left-to-right" evidence="14 18">
        <dbReference type="Rhea" id="RHEA:33608"/>
    </physiologicalReaction>
</comment>
<comment type="catalytic activity">
    <reaction evidence="8 9 12">
        <text>hexadecanoate + ATP + CoA = hexadecanoyl-CoA + AMP + diphosphate</text>
        <dbReference type="Rhea" id="RHEA:30751"/>
        <dbReference type="ChEBI" id="CHEBI:7896"/>
        <dbReference type="ChEBI" id="CHEBI:30616"/>
        <dbReference type="ChEBI" id="CHEBI:33019"/>
        <dbReference type="ChEBI" id="CHEBI:57287"/>
        <dbReference type="ChEBI" id="CHEBI:57379"/>
        <dbReference type="ChEBI" id="CHEBI:456215"/>
    </reaction>
    <physiologicalReaction direction="left-to-right" evidence="15 16 18">
        <dbReference type="Rhea" id="RHEA:30752"/>
    </physiologicalReaction>
</comment>
<comment type="catalytic activity">
    <reaction evidence="4 12">
        <text>(9Z)-hexadecenoate + ATP + CoA = (9Z)-hexadecenoyl-CoA + AMP + diphosphate</text>
        <dbReference type="Rhea" id="RHEA:33647"/>
        <dbReference type="ChEBI" id="CHEBI:30616"/>
        <dbReference type="ChEBI" id="CHEBI:32372"/>
        <dbReference type="ChEBI" id="CHEBI:33019"/>
        <dbReference type="ChEBI" id="CHEBI:57287"/>
        <dbReference type="ChEBI" id="CHEBI:61540"/>
        <dbReference type="ChEBI" id="CHEBI:456215"/>
    </reaction>
    <physiologicalReaction direction="left-to-right" evidence="14 18">
        <dbReference type="Rhea" id="RHEA:33648"/>
    </physiologicalReaction>
</comment>
<comment type="catalytic activity">
    <reaction evidence="12">
        <text>tetradecanoate + ATP + CoA = tetradecanoyl-CoA + AMP + diphosphate</text>
        <dbReference type="Rhea" id="RHEA:33619"/>
        <dbReference type="ChEBI" id="CHEBI:30616"/>
        <dbReference type="ChEBI" id="CHEBI:30807"/>
        <dbReference type="ChEBI" id="CHEBI:33019"/>
        <dbReference type="ChEBI" id="CHEBI:57287"/>
        <dbReference type="ChEBI" id="CHEBI:57385"/>
        <dbReference type="ChEBI" id="CHEBI:456215"/>
    </reaction>
    <physiologicalReaction direction="left-to-right" evidence="18">
        <dbReference type="Rhea" id="RHEA:33620"/>
    </physiologicalReaction>
</comment>
<comment type="catalytic activity">
    <reaction evidence="12">
        <text>(9Z)-tetradecenoate + ATP + CoA = (9Z)-tetradecenoyl-CoA + AMP + diphosphate</text>
        <dbReference type="Rhea" id="RHEA:33643"/>
        <dbReference type="ChEBI" id="CHEBI:30616"/>
        <dbReference type="ChEBI" id="CHEBI:32370"/>
        <dbReference type="ChEBI" id="CHEBI:33019"/>
        <dbReference type="ChEBI" id="CHEBI:57287"/>
        <dbReference type="ChEBI" id="CHEBI:65060"/>
        <dbReference type="ChEBI" id="CHEBI:456215"/>
    </reaction>
    <physiologicalReaction direction="left-to-right" evidence="18">
        <dbReference type="Rhea" id="RHEA:33644"/>
    </physiologicalReaction>
</comment>
<comment type="catalytic activity">
    <reaction evidence="12">
        <text>(9Z,12Z)-octadecadienoate + ATP + CoA = (9Z,12Z)-octadecadienoyl-CoA + AMP + diphosphate</text>
        <dbReference type="Rhea" id="RHEA:33651"/>
        <dbReference type="ChEBI" id="CHEBI:30245"/>
        <dbReference type="ChEBI" id="CHEBI:30616"/>
        <dbReference type="ChEBI" id="CHEBI:33019"/>
        <dbReference type="ChEBI" id="CHEBI:57287"/>
        <dbReference type="ChEBI" id="CHEBI:57383"/>
        <dbReference type="ChEBI" id="CHEBI:456215"/>
    </reaction>
    <physiologicalReaction direction="left-to-right" evidence="18">
        <dbReference type="Rhea" id="RHEA:33652"/>
    </physiologicalReaction>
</comment>
<comment type="catalytic activity">
    <reaction evidence="12">
        <text>dodecanoate + ATP + CoA = dodecanoyl-CoA + AMP + diphosphate</text>
        <dbReference type="Rhea" id="RHEA:33623"/>
        <dbReference type="ChEBI" id="CHEBI:18262"/>
        <dbReference type="ChEBI" id="CHEBI:30616"/>
        <dbReference type="ChEBI" id="CHEBI:33019"/>
        <dbReference type="ChEBI" id="CHEBI:57287"/>
        <dbReference type="ChEBI" id="CHEBI:57375"/>
        <dbReference type="ChEBI" id="CHEBI:456215"/>
    </reaction>
    <physiologicalReaction direction="left-to-right" evidence="18">
        <dbReference type="Rhea" id="RHEA:33624"/>
    </physiologicalReaction>
</comment>
<comment type="catalytic activity">
    <reaction evidence="12">
        <text>pentadecanoate + ATP + CoA = pentadecanoyl-CoA + AMP + diphosphate</text>
        <dbReference type="Rhea" id="RHEA:44076"/>
        <dbReference type="ChEBI" id="CHEBI:30616"/>
        <dbReference type="ChEBI" id="CHEBI:33019"/>
        <dbReference type="ChEBI" id="CHEBI:57287"/>
        <dbReference type="ChEBI" id="CHEBI:74309"/>
        <dbReference type="ChEBI" id="CHEBI:78795"/>
        <dbReference type="ChEBI" id="CHEBI:456215"/>
    </reaction>
    <physiologicalReaction direction="left-to-right" evidence="18">
        <dbReference type="Rhea" id="RHEA:44077"/>
    </physiologicalReaction>
</comment>
<comment type="catalytic activity">
    <reaction evidence="12">
        <text>undecanoate + ATP + CoA = undecanoyl-CoA + AMP + diphosphate</text>
        <dbReference type="Rhea" id="RHEA:44080"/>
        <dbReference type="ChEBI" id="CHEBI:30616"/>
        <dbReference type="ChEBI" id="CHEBI:32369"/>
        <dbReference type="ChEBI" id="CHEBI:33019"/>
        <dbReference type="ChEBI" id="CHEBI:57287"/>
        <dbReference type="ChEBI" id="CHEBI:77547"/>
        <dbReference type="ChEBI" id="CHEBI:456215"/>
    </reaction>
    <physiologicalReaction direction="left-to-right" evidence="18">
        <dbReference type="Rhea" id="RHEA:44081"/>
    </physiologicalReaction>
</comment>
<comment type="catalytic activity">
    <reaction evidence="12">
        <text>heptadecanoate + ATP + CoA = heptadecanoyl-CoA + AMP + diphosphate</text>
        <dbReference type="Rhea" id="RHEA:44084"/>
        <dbReference type="ChEBI" id="CHEBI:30616"/>
        <dbReference type="ChEBI" id="CHEBI:32366"/>
        <dbReference type="ChEBI" id="CHEBI:33019"/>
        <dbReference type="ChEBI" id="CHEBI:57287"/>
        <dbReference type="ChEBI" id="CHEBI:74307"/>
        <dbReference type="ChEBI" id="CHEBI:456215"/>
    </reaction>
    <physiologicalReaction direction="left-to-right" evidence="18">
        <dbReference type="Rhea" id="RHEA:44085"/>
    </physiologicalReaction>
</comment>
<comment type="catalytic activity">
    <reaction evidence="12">
        <text>octadecanoate + ATP + CoA = octadecanoyl-CoA + AMP + diphosphate</text>
        <dbReference type="Rhea" id="RHEA:33615"/>
        <dbReference type="ChEBI" id="CHEBI:25629"/>
        <dbReference type="ChEBI" id="CHEBI:30616"/>
        <dbReference type="ChEBI" id="CHEBI:33019"/>
        <dbReference type="ChEBI" id="CHEBI:57287"/>
        <dbReference type="ChEBI" id="CHEBI:57394"/>
        <dbReference type="ChEBI" id="CHEBI:456215"/>
    </reaction>
    <physiologicalReaction direction="left-to-right" evidence="18">
        <dbReference type="Rhea" id="RHEA:33616"/>
    </physiologicalReaction>
</comment>
<comment type="cofactor">
    <cofactor evidence="12">
        <name>Mg(2+)</name>
        <dbReference type="ChEBI" id="CHEBI:18420"/>
    </cofactor>
</comment>
<comment type="biophysicochemical properties">
    <kinetics>
        <KM evidence="12">17 uM for myristate</KM>
        <KM evidence="12">23 uM for palmitate</KM>
        <Vmax evidence="12">83.0 pmol/min/mg enzyme for myristate</Vmax>
        <Vmax evidence="12">250.0 pmol/min/mg enzyme for palmitate</Vmax>
    </kinetics>
    <phDependence>
        <text evidence="12">Optimum pH is 7.3-7.5.</text>
    </phDependence>
    <temperatureDependence>
        <text evidence="12">Optimum temperature is 30 degrees Celsius.</text>
    </temperatureDependence>
</comment>
<comment type="subunit">
    <text evidence="5">Interacts with FAT1.</text>
</comment>
<comment type="subcellular location">
    <subcellularLocation>
        <location evidence="3 7 10">Lipid droplet</location>
    </subcellularLocation>
    <subcellularLocation>
        <location evidence="11">Cell membrane</location>
    </subcellularLocation>
</comment>
<comment type="domain">
    <text evidence="17">The FACS motif is required for catalytic activity and substrate specificity.</text>
</comment>
<comment type="miscellaneous">
    <text evidence="6">Present with 7470 molecules/cell in log phase SD medium.</text>
</comment>
<comment type="similarity">
    <text evidence="13">Belongs to the ATP-dependent AMP-binding enzyme family.</text>
</comment>
<organism>
    <name type="scientific">Saccharomyces cerevisiae (strain ATCC 204508 / S288c)</name>
    <name type="common">Baker's yeast</name>
    <dbReference type="NCBI Taxonomy" id="559292"/>
    <lineage>
        <taxon>Eukaryota</taxon>
        <taxon>Fungi</taxon>
        <taxon>Dikarya</taxon>
        <taxon>Ascomycota</taxon>
        <taxon>Saccharomycotina</taxon>
        <taxon>Saccharomycetes</taxon>
        <taxon>Saccharomycetales</taxon>
        <taxon>Saccharomycetaceae</taxon>
        <taxon>Saccharomyces</taxon>
    </lineage>
</organism>
<keyword id="KW-0067">ATP-binding</keyword>
<keyword id="KW-1003">Cell membrane</keyword>
<keyword id="KW-0903">Direct protein sequencing</keyword>
<keyword id="KW-0276">Fatty acid metabolism</keyword>
<keyword id="KW-1017">Isopeptide bond</keyword>
<keyword id="KW-0436">Ligase</keyword>
<keyword id="KW-0551">Lipid droplet</keyword>
<keyword id="KW-0443">Lipid metabolism</keyword>
<keyword id="KW-0460">Magnesium</keyword>
<keyword id="KW-0472">Membrane</keyword>
<keyword id="KW-0547">Nucleotide-binding</keyword>
<keyword id="KW-1185">Reference proteome</keyword>
<keyword id="KW-0832">Ubl conjugation</keyword>
<accession>P30624</accession>
<accession>D6W316</accession>
<proteinExistence type="evidence at protein level"/>
<feature type="chain" id="PRO_0000193119" description="Long-chain-fatty-acid--CoA ligase 1">
    <location>
        <begin position="1"/>
        <end position="700"/>
    </location>
</feature>
<feature type="region of interest" description="Disordered" evidence="2">
    <location>
        <begin position="1"/>
        <end position="21"/>
    </location>
</feature>
<feature type="short sequence motif" description="FACS" evidence="17">
    <location>
        <begin position="531"/>
        <end position="580"/>
    </location>
</feature>
<feature type="binding site" evidence="1">
    <location>
        <begin position="269"/>
        <end position="280"/>
    </location>
    <ligand>
        <name>ATP</name>
        <dbReference type="ChEBI" id="CHEBI:30616"/>
    </ligand>
</feature>
<feature type="cross-link" description="Glycyl lysine isopeptide (Lys-Gly) (interchain with G-Cter in ubiquitin)" evidence="19">
    <location>
        <position position="189"/>
    </location>
</feature>
<feature type="mutagenesis site" description="Likely essential for ATP utilization. Reduces catalytic activity by 89%. Reduces the LCA palmitic acid transport activity by 71%. has no effect on the LCB dihydrosphingosine (DHS) transport activity." evidence="11">
    <original>S</original>
    <variation>A</variation>
    <location>
        <position position="271"/>
    </location>
</feature>
<feature type="mutagenesis site" description="Abolishes catalytic activity. Reduces the LCA palmitic acid transport activity by 96%. Abolishes the LCB dihydrosphingosine (DHS) transport activity." evidence="11">
    <original>D</original>
    <variation>A</variation>
    <location>
        <position position="538"/>
    </location>
</feature>
<reference key="1">
    <citation type="journal article" date="1992" name="J. Cell Biol.">
        <title>Isolation of a Saccharomyces cerevisiae long chain fatty acyl:CoA synthetase gene (FAA1) and assessment of its role in protein N-myristoylation.</title>
        <authorList>
            <person name="Duronio R.J."/>
            <person name="Knoll L.J."/>
            <person name="Gordon J.I."/>
        </authorList>
    </citation>
    <scope>NUCLEOTIDE SEQUENCE [GENOMIC DNA]</scope>
    <scope>PROTEIN SEQUENCE OF 4-14</scope>
    <source>
        <strain>ATCC 204508 / S288c</strain>
    </source>
</reference>
<reference key="2">
    <citation type="journal article" date="1996" name="Yeast">
        <title>Sequencing of a 35.71 kb DNA segment on the right arm of yeast chromosome XV reveals regions of similarity to chromosomes I and XIII.</title>
        <authorList>
            <person name="Pearson B.M."/>
            <person name="Hernando Y."/>
            <person name="Payne J."/>
            <person name="Wolf S.S."/>
            <person name="Kalogeropoulos A."/>
            <person name="Schweizer M."/>
        </authorList>
    </citation>
    <scope>NUCLEOTIDE SEQUENCE [GENOMIC DNA]</scope>
    <source>
        <strain>ATCC 96604 / S288c / FY1679</strain>
    </source>
</reference>
<reference key="3">
    <citation type="journal article" date="1997" name="Nature">
        <title>The nucleotide sequence of Saccharomyces cerevisiae chromosome XV.</title>
        <authorList>
            <person name="Dujon B."/>
            <person name="Albermann K."/>
            <person name="Aldea M."/>
            <person name="Alexandraki D."/>
            <person name="Ansorge W."/>
            <person name="Arino J."/>
            <person name="Benes V."/>
            <person name="Bohn C."/>
            <person name="Bolotin-Fukuhara M."/>
            <person name="Bordonne R."/>
            <person name="Boyer J."/>
            <person name="Camasses A."/>
            <person name="Casamayor A."/>
            <person name="Casas C."/>
            <person name="Cheret G."/>
            <person name="Cziepluch C."/>
            <person name="Daignan-Fornier B."/>
            <person name="Dang V.-D."/>
            <person name="de Haan M."/>
            <person name="Delius H."/>
            <person name="Durand P."/>
            <person name="Fairhead C."/>
            <person name="Feldmann H."/>
            <person name="Gaillon L."/>
            <person name="Galisson F."/>
            <person name="Gamo F.-J."/>
            <person name="Gancedo C."/>
            <person name="Goffeau A."/>
            <person name="Goulding S.E."/>
            <person name="Grivell L.A."/>
            <person name="Habbig B."/>
            <person name="Hand N.J."/>
            <person name="Hani J."/>
            <person name="Hattenhorst U."/>
            <person name="Hebling U."/>
            <person name="Hernando Y."/>
            <person name="Herrero E."/>
            <person name="Heumann K."/>
            <person name="Hiesel R."/>
            <person name="Hilger F."/>
            <person name="Hofmann B."/>
            <person name="Hollenberg C.P."/>
            <person name="Hughes B."/>
            <person name="Jauniaux J.-C."/>
            <person name="Kalogeropoulos A."/>
            <person name="Katsoulou C."/>
            <person name="Kordes E."/>
            <person name="Lafuente M.J."/>
            <person name="Landt O."/>
            <person name="Louis E.J."/>
            <person name="Maarse A.C."/>
            <person name="Madania A."/>
            <person name="Mannhaupt G."/>
            <person name="Marck C."/>
            <person name="Martin R.P."/>
            <person name="Mewes H.-W."/>
            <person name="Michaux G."/>
            <person name="Paces V."/>
            <person name="Parle-McDermott A.G."/>
            <person name="Pearson B.M."/>
            <person name="Perrin A."/>
            <person name="Pettersson B."/>
            <person name="Poch O."/>
            <person name="Pohl T.M."/>
            <person name="Poirey R."/>
            <person name="Portetelle D."/>
            <person name="Pujol A."/>
            <person name="Purnelle B."/>
            <person name="Ramezani Rad M."/>
            <person name="Rechmann S."/>
            <person name="Schwager C."/>
            <person name="Schweizer M."/>
            <person name="Sor F."/>
            <person name="Sterky F."/>
            <person name="Tarassov I.A."/>
            <person name="Teodoru C."/>
            <person name="Tettelin H."/>
            <person name="Thierry A."/>
            <person name="Tobiasch E."/>
            <person name="Tzermia M."/>
            <person name="Uhlen M."/>
            <person name="Unseld M."/>
            <person name="Valens M."/>
            <person name="Vandenbol M."/>
            <person name="Vetter I."/>
            <person name="Vlcek C."/>
            <person name="Voet M."/>
            <person name="Volckaert G."/>
            <person name="Voss H."/>
            <person name="Wambutt R."/>
            <person name="Wedler H."/>
            <person name="Wiemann S."/>
            <person name="Winsor B."/>
            <person name="Wolfe K.H."/>
            <person name="Zollner A."/>
            <person name="Zumstein E."/>
            <person name="Kleine K."/>
        </authorList>
    </citation>
    <scope>NUCLEOTIDE SEQUENCE [LARGE SCALE GENOMIC DNA]</scope>
    <source>
        <strain>ATCC 204508 / S288c</strain>
    </source>
</reference>
<reference key="4">
    <citation type="journal article" date="2014" name="G3 (Bethesda)">
        <title>The reference genome sequence of Saccharomyces cerevisiae: Then and now.</title>
        <authorList>
            <person name="Engel S.R."/>
            <person name="Dietrich F.S."/>
            <person name="Fisk D.G."/>
            <person name="Binkley G."/>
            <person name="Balakrishnan R."/>
            <person name="Costanzo M.C."/>
            <person name="Dwight S.S."/>
            <person name="Hitz B.C."/>
            <person name="Karra K."/>
            <person name="Nash R.S."/>
            <person name="Weng S."/>
            <person name="Wong E.D."/>
            <person name="Lloyd P."/>
            <person name="Skrzypek M.S."/>
            <person name="Miyasato S.R."/>
            <person name="Simison M."/>
            <person name="Cherry J.M."/>
        </authorList>
    </citation>
    <scope>GENOME REANNOTATION</scope>
    <source>
        <strain>ATCC 204508 / S288c</strain>
    </source>
</reference>
<reference key="5">
    <citation type="journal article" date="1994" name="J. Biol. Chem.">
        <title>Biochemical studies of three Saccharomyces cerevisiae acyl-CoA synthetases, Faa1p, Faa2p, and Faa3p.</title>
        <authorList>
            <person name="Knoll L.J."/>
            <person name="Johnson D.R."/>
            <person name="Gordon J.I."/>
        </authorList>
    </citation>
    <scope>FUNCTION</scope>
    <scope>CATALYTIC ACTIVITY</scope>
    <scope>BIOPHYSICOCHEMICAL PROPERTIES</scope>
</reference>
<reference key="6">
    <citation type="journal article" date="1999" name="J. Bacteriol.">
        <title>Identification and characterization of major lipid particle proteins of the yeast Saccharomyces cerevisiae.</title>
        <authorList>
            <person name="Athenstaedt K."/>
            <person name="Zweytick D."/>
            <person name="Jandrositz A."/>
            <person name="Kohlwein S.D."/>
            <person name="Daum G."/>
        </authorList>
    </citation>
    <scope>SUBCELLULAR LOCATION</scope>
</reference>
<reference key="7">
    <citation type="journal article" date="2001" name="J. Biol. Chem.">
        <title>The acyl-CoA synthetases encoded within FAA1 and FAA4 in Saccharomyces cerevisiae function as components of the fatty acid transport system linking import, activation, and intracellular utilization.</title>
        <authorList>
            <person name="Faergeman N.J."/>
            <person name="Black P.N."/>
            <person name="Zhao X.D."/>
            <person name="Knudsen J."/>
            <person name="DiRusso C.C."/>
        </authorList>
    </citation>
    <scope>FUNCTION</scope>
</reference>
<reference key="8">
    <citation type="journal article" date="2003" name="J. Biol. Chem.">
        <title>Vectorial acylation in Saccharomyces cerevisiae. Fat1p and fatty acyl-CoA synthetase are interacting components of a fatty acid import complex.</title>
        <authorList>
            <person name="Zou Z."/>
            <person name="Tong F."/>
            <person name="Faergeman N.J."/>
            <person name="Boersting C."/>
            <person name="Black P.N."/>
            <person name="DiRusso C.C."/>
        </authorList>
    </citation>
    <scope>FUNCTION</scope>
    <scope>INTERACTION WITH FAT1</scope>
</reference>
<reference key="9">
    <citation type="journal article" date="2003" name="Nature">
        <title>Global analysis of protein expression in yeast.</title>
        <authorList>
            <person name="Ghaemmaghami S."/>
            <person name="Huh W.-K."/>
            <person name="Bower K."/>
            <person name="Howson R.W."/>
            <person name="Belle A."/>
            <person name="Dephoure N."/>
            <person name="O'Shea E.K."/>
            <person name="Weissman J.S."/>
        </authorList>
    </citation>
    <scope>LEVEL OF PROTEIN EXPRESSION [LARGE SCALE ANALYSIS]</scope>
</reference>
<reference key="10">
    <citation type="journal article" date="2008" name="Mol. Cell. Proteomics">
        <title>A multidimensional chromatography technology for in-depth phosphoproteome analysis.</title>
        <authorList>
            <person name="Albuquerque C.P."/>
            <person name="Smolka M.B."/>
            <person name="Payne S.H."/>
            <person name="Bafna V."/>
            <person name="Eng J."/>
            <person name="Zhou H."/>
        </authorList>
    </citation>
    <scope>IDENTIFICATION BY MASS SPECTROMETRY [LARGE SCALE ANALYSIS]</scope>
</reference>
<reference key="11">
    <citation type="journal article" date="2011" name="Biochim. Biophys. Acta">
        <title>Lipid particles/droplets of the yeast Saccharomyces cerevisiae revisited: lipidome meets proteome.</title>
        <authorList>
            <person name="Grillitsch K."/>
            <person name="Connerth M."/>
            <person name="Kofeler H."/>
            <person name="Arrey T.N."/>
            <person name="Rietschel B."/>
            <person name="Wagner B."/>
            <person name="Karas M."/>
            <person name="Daum G."/>
        </authorList>
    </citation>
    <scope>SUBCELLULAR LOCATION</scope>
</reference>
<reference key="12">
    <citation type="journal article" date="2012" name="Mol. Cell">
        <title>The Sjogren-Larsson syndrome gene encodes a hexadecenal dehydrogenase of the sphingosine 1-phosphate degradation pathway.</title>
        <authorList>
            <person name="Nakahara K."/>
            <person name="Ohkuni A."/>
            <person name="Kitamura T."/>
            <person name="Abe K."/>
            <person name="Naganuma T."/>
            <person name="Ohno Y."/>
            <person name="Zoeller R.A."/>
            <person name="Kihara A."/>
        </authorList>
    </citation>
    <scope>FUNCTION</scope>
    <scope>CATALYTIC ACTIVITY</scope>
</reference>
<reference key="13">
    <citation type="journal article" date="2012" name="Proc. Natl. Acad. Sci. U.S.A.">
        <title>N-terminal acetylome analyses and functional insights of the N-terminal acetyltransferase NatB.</title>
        <authorList>
            <person name="Van Damme P."/>
            <person name="Lasa M."/>
            <person name="Polevoda B."/>
            <person name="Gazquez C."/>
            <person name="Elosegui-Artola A."/>
            <person name="Kim D.S."/>
            <person name="De Juan-Pardo E."/>
            <person name="Demeyer K."/>
            <person name="Hole K."/>
            <person name="Larrea E."/>
            <person name="Timmerman E."/>
            <person name="Prieto J."/>
            <person name="Arnesen T."/>
            <person name="Sherman F."/>
            <person name="Gevaert K."/>
            <person name="Aldabe R."/>
        </authorList>
    </citation>
    <scope>IDENTIFICATION BY MASS SPECTROMETRY [LARGE SCALE ANALYSIS]</scope>
</reference>
<reference key="14">
    <citation type="journal article" date="2012" name="Proteomics">
        <title>Sites of ubiquitin attachment in Saccharomyces cerevisiae.</title>
        <authorList>
            <person name="Starita L.M."/>
            <person name="Lo R.S."/>
            <person name="Eng J.K."/>
            <person name="von Haller P.D."/>
            <person name="Fields S."/>
        </authorList>
    </citation>
    <scope>UBIQUITINATION [LARGE SCALE ANALYSIS] AT LYS-189</scope>
    <scope>IDENTIFICATION BY MASS SPECTROMETRY [LARGE SCALE ANALYSIS]</scope>
</reference>
<reference key="15">
    <citation type="journal article" date="2013" name="Biochem. Biophys. Res. Commun.">
        <title>Identification of acyl-CoA synthetases involved in the mammalian sphingosine 1-phosphate metabolic pathway.</title>
        <authorList>
            <person name="Ohkuni A."/>
            <person name="Ohno Y."/>
            <person name="Kihara A."/>
        </authorList>
    </citation>
    <scope>CATALYTIC ACTIVITY</scope>
</reference>
<reference key="16">
    <citation type="journal article" date="2014" name="J. Lipid Res.">
        <title>High-confidence proteomic analysis of yeast lipid droplets identifies additional droplet proteins and reveals connections to dolichol synthesis and sterol acetylation.</title>
        <authorList>
            <person name="Currie E."/>
            <person name="Guo X."/>
            <person name="Christiano R."/>
            <person name="Chitraju C."/>
            <person name="Kory N."/>
            <person name="Harrison K."/>
            <person name="Haas J."/>
            <person name="Walther T.C."/>
            <person name="Farese R.V. Jr."/>
        </authorList>
    </citation>
    <scope>SUBCELLULAR LOCATION</scope>
</reference>
<reference key="17">
    <citation type="journal article" date="2016" name="Sci. Rep.">
        <title>Long-chain bases of sphingolipids are transported into cells via the acyl-CoA synthetases.</title>
        <authorList>
            <person name="Narita T."/>
            <person name="Naganuma T."/>
            <person name="Sase Y."/>
            <person name="Kihara A."/>
        </authorList>
    </citation>
    <scope>FUNCTION</scope>
    <scope>SUBCELLULAR LOCATION</scope>
    <scope>MUTAGENESIS OF SER-271 AND ASP-538</scope>
    <scope>DOMAIN</scope>
</reference>
<sequence>MVAQYTVPVGKAANEHETAPRRNYQCREKPLVRPPNTKCSTVYEFVLECFQKNKNSNAMGWRDVKEIHEESKSVMKKVDGKETSVEKKWMYYELSHYHYNSFDQLTDIMHEIGRGLVKIGLKPNDDDKLHLYAATSHKWMKMFLGAQSQGIPVVTAYDTLGEKGLIHSLVQTGSKAIFTDNSLLPSLIKPVQAAQDVKYIIHFDSISSEDRRQSGKIYQSAHDAINRIKEVRPDIKTFSFDDILKLGKESCNEIDVHPPGKDDLCCIMYTSGSTGEPKGVVLKHSNVVAGVGGASLNVLKFVGNTDRVICFLPLAHIFELVFELLSFYWGACIGYATVKTLTSSSVRNCQGDLQEFKPTIMVGVAAVWETVRKGILNQIDNLPFLTKKIFWTAYNTKLNMQRLHIPGGGALGNLVFKKIRTATGGQLRYLLNGGSPISRDAQEFITNLICPMLIGYGLTETCASTTILDPANFELGVAGDLTGCVTVKLVDVEELGYFAKNNQGEVWITGANVTPEYYKNEEETSQALTSDGWFKTGDIGEWEANGHLKIIDRKKNLVKTMNGEYIALEKLESVYRSNEYVANICVYADQSKTKPVGIIVPNHAPLTKLAKKLGIMEQKDSSINIENYLEDAKLIKAVYSDLLKTGKDQGLVGIELLAGIVFFDGEWTPQNGFVTSAQKLKRKDILNAVKDKVDAVYSSS</sequence>
<evidence type="ECO:0000250" key="1">
    <source>
        <dbReference type="UniProtKB" id="P69451"/>
    </source>
</evidence>
<evidence type="ECO:0000256" key="2">
    <source>
        <dbReference type="SAM" id="MobiDB-lite"/>
    </source>
</evidence>
<evidence type="ECO:0000269" key="3">
    <source>
    </source>
</evidence>
<evidence type="ECO:0000269" key="4">
    <source>
    </source>
</evidence>
<evidence type="ECO:0000269" key="5">
    <source>
    </source>
</evidence>
<evidence type="ECO:0000269" key="6">
    <source>
    </source>
</evidence>
<evidence type="ECO:0000269" key="7">
    <source>
    </source>
</evidence>
<evidence type="ECO:0000269" key="8">
    <source>
    </source>
</evidence>
<evidence type="ECO:0000269" key="9">
    <source>
    </source>
</evidence>
<evidence type="ECO:0000269" key="10">
    <source>
    </source>
</evidence>
<evidence type="ECO:0000269" key="11">
    <source>
    </source>
</evidence>
<evidence type="ECO:0000269" key="12">
    <source>
    </source>
</evidence>
<evidence type="ECO:0000305" key="13"/>
<evidence type="ECO:0000305" key="14">
    <source>
    </source>
</evidence>
<evidence type="ECO:0000305" key="15">
    <source>
    </source>
</evidence>
<evidence type="ECO:0000305" key="16">
    <source>
    </source>
</evidence>
<evidence type="ECO:0000305" key="17">
    <source>
    </source>
</evidence>
<evidence type="ECO:0000305" key="18">
    <source>
    </source>
</evidence>
<evidence type="ECO:0007744" key="19">
    <source>
    </source>
</evidence>
<gene>
    <name type="primary">FAA1</name>
    <name type="ordered locus">YOR317W</name>
    <name type="ORF">O6136</name>
</gene>
<name>LCF1_YEAST</name>